<comment type="function">
    <text evidence="1 3">Dermonecrotic toxins cleave the phosphodiester linkage between the phosphate and headgroup of certain phospholipids (sphingolipid and lysolipid substrates), forming an alcohol (often choline) and a cyclic phosphate (By similarity). This toxin acts on sphingomyelin (SM) (By similarity). It may also act on ceramide phosphoethanolamine (CPE), lysophosphatidylcholine (LPC) and lysophosphatidylethanolamine (LPE), but not on lysophosphatidylserine (LPS), and lysophosphatidylglycerol (LPG) (By similarity). It acts by transphosphatidylation, releasing exclusively cyclic phosphate products as second products (By similarity). Induces dermonecrosis, hemolysis, increased vascular permeability, edema, inflammatory response, and platelet aggregation (By similarity).</text>
</comment>
<comment type="catalytic activity">
    <reaction evidence="1">
        <text>an N-(acyl)-sphingosylphosphocholine = an N-(acyl)-sphingosyl-1,3-cyclic phosphate + choline</text>
        <dbReference type="Rhea" id="RHEA:60652"/>
        <dbReference type="ChEBI" id="CHEBI:15354"/>
        <dbReference type="ChEBI" id="CHEBI:64583"/>
        <dbReference type="ChEBI" id="CHEBI:143892"/>
    </reaction>
</comment>
<comment type="catalytic activity">
    <reaction evidence="1">
        <text>an N-(acyl)-sphingosylphosphoethanolamine = an N-(acyl)-sphingosyl-1,3-cyclic phosphate + ethanolamine</text>
        <dbReference type="Rhea" id="RHEA:60648"/>
        <dbReference type="ChEBI" id="CHEBI:57603"/>
        <dbReference type="ChEBI" id="CHEBI:143891"/>
        <dbReference type="ChEBI" id="CHEBI:143892"/>
    </reaction>
</comment>
<comment type="catalytic activity">
    <reaction evidence="1">
        <text>a 1-acyl-sn-glycero-3-phosphocholine = a 1-acyl-sn-glycero-2,3-cyclic phosphate + choline</text>
        <dbReference type="Rhea" id="RHEA:60700"/>
        <dbReference type="ChEBI" id="CHEBI:15354"/>
        <dbReference type="ChEBI" id="CHEBI:58168"/>
        <dbReference type="ChEBI" id="CHEBI:143947"/>
    </reaction>
</comment>
<comment type="catalytic activity">
    <reaction evidence="1">
        <text>a 1-acyl-sn-glycero-3-phosphoethanolamine = a 1-acyl-sn-glycero-2,3-cyclic phosphate + ethanolamine</text>
        <dbReference type="Rhea" id="RHEA:60704"/>
        <dbReference type="ChEBI" id="CHEBI:57603"/>
        <dbReference type="ChEBI" id="CHEBI:64381"/>
        <dbReference type="ChEBI" id="CHEBI:143947"/>
    </reaction>
</comment>
<comment type="cofactor">
    <cofactor evidence="5">
        <name>Mg(2+)</name>
        <dbReference type="ChEBI" id="CHEBI:18420"/>
    </cofactor>
    <text evidence="5">Binds 1 Mg(2+) ion per subunit.</text>
</comment>
<comment type="subcellular location">
    <subcellularLocation>
        <location evidence="8">Secreted</location>
    </subcellularLocation>
</comment>
<comment type="tissue specificity">
    <text evidence="8">Expressed by the venom gland.</text>
</comment>
<comment type="similarity">
    <text evidence="7">Belongs to the arthropod phospholipase D family. Class II subfamily.</text>
</comment>
<comment type="caution">
    <text evidence="1 2 4">The most common activity assay for dermonecrotic toxins detects enzymatic activity by monitoring choline release from substrate. Liberation of choline from sphingomyelin (SM) or lysophosphatidylcholine (LPC) is commonly assumed to result from substrate hydrolysis, giving either ceramide-1-phosphate (C1P) or lysophosphatidic acid (LPA), respectively, as a second product. However, two studies from Lajoie and colleagues (2013 and 2015) report the observation of exclusive formation of cyclic phosphate products as second products, resulting from intramolecular transphosphatidylation. Cyclic phosphates have vastly different biological properties from their monoester counterparts, and they may be relevant to the pathology of brown spider envenomation.</text>
</comment>
<sequence length="275" mass="31280">WIMGHMVNEVYQIDEFVDLGANSIETDITFDDDAMAEYSYHGVPCDCKRWCHKWEYVNTFLDGLRRATTPGDSKYRKELSLVVFDLKTGDLSSSTAYKGGKLFGQKLLDRYWNGGNNGGRAYIILSIPDLDHYAFITGFKEALKNAGHEELLAKIGYDFSGNDDLGSTRTALNKAGIKDREHVWQSDGITNCIGRGLGRVRDAVRNRDSSNGYINKVYYWTIEKYVSVRDALDAEVDGIMTNEPDVIVNVLNEGNYRGRFRLATYDDNPWETFKR</sequence>
<proteinExistence type="evidence at transcript level"/>
<evidence type="ECO:0000250" key="1">
    <source>
        <dbReference type="UniProtKB" id="A0A0D4WTV1"/>
    </source>
</evidence>
<evidence type="ECO:0000250" key="2">
    <source>
        <dbReference type="UniProtKB" id="A0A0D4WV12"/>
    </source>
</evidence>
<evidence type="ECO:0000250" key="3">
    <source>
        <dbReference type="UniProtKB" id="P0CE80"/>
    </source>
</evidence>
<evidence type="ECO:0000250" key="4">
    <source>
        <dbReference type="UniProtKB" id="Q4ZFU2"/>
    </source>
</evidence>
<evidence type="ECO:0000250" key="5">
    <source>
        <dbReference type="UniProtKB" id="Q8I914"/>
    </source>
</evidence>
<evidence type="ECO:0000303" key="6">
    <source>
    </source>
</evidence>
<evidence type="ECO:0000305" key="7"/>
<evidence type="ECO:0000305" key="8">
    <source>
    </source>
</evidence>
<name>A42_LOXHI</name>
<feature type="chain" id="PRO_0000392843" description="Dermonecrotic toxin LhSicTox-alphaIV2">
    <location>
        <begin position="1" status="less than"/>
        <end position="275"/>
    </location>
</feature>
<feature type="active site" evidence="5">
    <location>
        <position position="5"/>
    </location>
</feature>
<feature type="active site" description="Nucleophile" evidence="5">
    <location>
        <position position="41"/>
    </location>
</feature>
<feature type="binding site" evidence="5">
    <location>
        <position position="25"/>
    </location>
    <ligand>
        <name>Mg(2+)</name>
        <dbReference type="ChEBI" id="CHEBI:18420"/>
    </ligand>
</feature>
<feature type="binding site" evidence="5">
    <location>
        <position position="27"/>
    </location>
    <ligand>
        <name>Mg(2+)</name>
        <dbReference type="ChEBI" id="CHEBI:18420"/>
    </ligand>
</feature>
<feature type="binding site" evidence="5">
    <location>
        <position position="85"/>
    </location>
    <ligand>
        <name>Mg(2+)</name>
        <dbReference type="ChEBI" id="CHEBI:18420"/>
    </ligand>
</feature>
<feature type="disulfide bond" evidence="3">
    <location>
        <begin position="45"/>
        <end position="51"/>
    </location>
</feature>
<feature type="disulfide bond" evidence="3">
    <location>
        <begin position="47"/>
        <end position="192"/>
    </location>
</feature>
<feature type="non-terminal residue">
    <location>
        <position position="1"/>
    </location>
</feature>
<organism>
    <name type="scientific">Loxosceles hirsuta</name>
    <name type="common">Recluse spider</name>
    <dbReference type="NCBI Taxonomy" id="571525"/>
    <lineage>
        <taxon>Eukaryota</taxon>
        <taxon>Metazoa</taxon>
        <taxon>Ecdysozoa</taxon>
        <taxon>Arthropoda</taxon>
        <taxon>Chelicerata</taxon>
        <taxon>Arachnida</taxon>
        <taxon>Araneae</taxon>
        <taxon>Araneomorphae</taxon>
        <taxon>Haplogynae</taxon>
        <taxon>Scytodoidea</taxon>
        <taxon>Sicariidae</taxon>
        <taxon>Loxosceles</taxon>
    </lineage>
</organism>
<accession>C0JB17</accession>
<reference key="1">
    <citation type="journal article" date="2009" name="Mol. Biol. Evol.">
        <title>Molecular evolution, functional variation, and proposed nomenclature of the gene family that includes sphingomyelinase D in sicariid spider venoms.</title>
        <authorList>
            <person name="Binford G.J."/>
            <person name="Bodner M.R."/>
            <person name="Cordes M.H."/>
            <person name="Baldwin K.L."/>
            <person name="Rynerson M.R."/>
            <person name="Burns S.N."/>
            <person name="Zobel-Thropp P.A."/>
        </authorList>
    </citation>
    <scope>NUCLEOTIDE SEQUENCE [MRNA]</scope>
    <scope>NOMENCLATURE</scope>
    <source>
        <tissue>Venom gland</tissue>
    </source>
</reference>
<protein>
    <recommendedName>
        <fullName evidence="6">Dermonecrotic toxin LhSicTox-alphaIV2</fullName>
        <ecNumber evidence="4">4.6.1.-</ecNumber>
    </recommendedName>
    <alternativeName>
        <fullName>Phospholipase D</fullName>
        <shortName>PLD</shortName>
    </alternativeName>
    <alternativeName>
        <fullName>Sphingomyelin phosphodiesterase D</fullName>
        <shortName>SMD</shortName>
        <shortName>SMase D</shortName>
        <shortName>Sphingomyelinase D</shortName>
    </alternativeName>
</protein>
<keyword id="KW-0204">Cytolysis</keyword>
<keyword id="KW-1061">Dermonecrotic toxin</keyword>
<keyword id="KW-1015">Disulfide bond</keyword>
<keyword id="KW-0354">Hemolysis</keyword>
<keyword id="KW-0442">Lipid degradation</keyword>
<keyword id="KW-0443">Lipid metabolism</keyword>
<keyword id="KW-0456">Lyase</keyword>
<keyword id="KW-0460">Magnesium</keyword>
<keyword id="KW-0479">Metal-binding</keyword>
<keyword id="KW-0964">Secreted</keyword>
<keyword id="KW-0800">Toxin</keyword>
<dbReference type="EC" id="4.6.1.-" evidence="4"/>
<dbReference type="EMBL" id="FJ171452">
    <property type="protein sequence ID" value="ACN48948.1"/>
    <property type="molecule type" value="mRNA"/>
</dbReference>
<dbReference type="SMR" id="C0JB17"/>
<dbReference type="GO" id="GO:0005576">
    <property type="term" value="C:extracellular region"/>
    <property type="evidence" value="ECO:0007669"/>
    <property type="project" value="UniProtKB-SubCell"/>
</dbReference>
<dbReference type="GO" id="GO:0016829">
    <property type="term" value="F:lyase activity"/>
    <property type="evidence" value="ECO:0007669"/>
    <property type="project" value="UniProtKB-KW"/>
</dbReference>
<dbReference type="GO" id="GO:0046872">
    <property type="term" value="F:metal ion binding"/>
    <property type="evidence" value="ECO:0007669"/>
    <property type="project" value="UniProtKB-KW"/>
</dbReference>
<dbReference type="GO" id="GO:0008081">
    <property type="term" value="F:phosphoric diester hydrolase activity"/>
    <property type="evidence" value="ECO:0007669"/>
    <property type="project" value="InterPro"/>
</dbReference>
<dbReference type="GO" id="GO:0090729">
    <property type="term" value="F:toxin activity"/>
    <property type="evidence" value="ECO:0007669"/>
    <property type="project" value="UniProtKB-KW"/>
</dbReference>
<dbReference type="GO" id="GO:0031640">
    <property type="term" value="P:killing of cells of another organism"/>
    <property type="evidence" value="ECO:0007669"/>
    <property type="project" value="UniProtKB-KW"/>
</dbReference>
<dbReference type="GO" id="GO:0016042">
    <property type="term" value="P:lipid catabolic process"/>
    <property type="evidence" value="ECO:0007669"/>
    <property type="project" value="UniProtKB-KW"/>
</dbReference>
<dbReference type="CDD" id="cd08576">
    <property type="entry name" value="GDPD_like_SMaseD_PLD"/>
    <property type="match status" value="1"/>
</dbReference>
<dbReference type="Gene3D" id="3.20.20.190">
    <property type="entry name" value="Phosphatidylinositol (PI) phosphodiesterase"/>
    <property type="match status" value="1"/>
</dbReference>
<dbReference type="InterPro" id="IPR017946">
    <property type="entry name" value="PLC-like_Pdiesterase_TIM-brl"/>
</dbReference>
<dbReference type="SUPFAM" id="SSF51695">
    <property type="entry name" value="PLC-like phosphodiesterases"/>
    <property type="match status" value="1"/>
</dbReference>